<dbReference type="EMBL" id="AJ248284">
    <property type="protein sequence ID" value="CAB49241.1"/>
    <property type="molecule type" value="Genomic_DNA"/>
</dbReference>
<dbReference type="EMBL" id="HE613800">
    <property type="protein sequence ID" value="CCE69696.1"/>
    <property type="molecule type" value="Genomic_DNA"/>
</dbReference>
<dbReference type="PIR" id="B75145">
    <property type="entry name" value="B75145"/>
</dbReference>
<dbReference type="RefSeq" id="WP_010867441.1">
    <property type="nucleotide sequence ID" value="NC_000868.1"/>
</dbReference>
<dbReference type="SMR" id="Q9V1V7"/>
<dbReference type="STRING" id="272844.PAB2138"/>
<dbReference type="KEGG" id="pab:PAB2138"/>
<dbReference type="PATRIC" id="fig|272844.11.peg.340"/>
<dbReference type="eggNOG" id="arCOG00779">
    <property type="taxonomic scope" value="Archaea"/>
</dbReference>
<dbReference type="HOGENOM" id="CLU_109163_0_0_2"/>
<dbReference type="OrthoDB" id="9418at2157"/>
<dbReference type="PhylomeDB" id="Q9V1V7"/>
<dbReference type="Proteomes" id="UP000000810">
    <property type="component" value="Chromosome"/>
</dbReference>
<dbReference type="Proteomes" id="UP000009139">
    <property type="component" value="Chromosome"/>
</dbReference>
<dbReference type="GO" id="GO:0022625">
    <property type="term" value="C:cytosolic large ribosomal subunit"/>
    <property type="evidence" value="ECO:0007669"/>
    <property type="project" value="TreeGrafter"/>
</dbReference>
<dbReference type="GO" id="GO:0019843">
    <property type="term" value="F:rRNA binding"/>
    <property type="evidence" value="ECO:0007669"/>
    <property type="project" value="UniProtKB-UniRule"/>
</dbReference>
<dbReference type="GO" id="GO:0003735">
    <property type="term" value="F:structural constituent of ribosome"/>
    <property type="evidence" value="ECO:0007669"/>
    <property type="project" value="InterPro"/>
</dbReference>
<dbReference type="GO" id="GO:0006412">
    <property type="term" value="P:translation"/>
    <property type="evidence" value="ECO:0007669"/>
    <property type="project" value="UniProtKB-UniRule"/>
</dbReference>
<dbReference type="FunFam" id="4.10.990.10:FF:000001">
    <property type="entry name" value="50S ribosomal protein L15"/>
    <property type="match status" value="1"/>
</dbReference>
<dbReference type="Gene3D" id="3.100.10.10">
    <property type="match status" value="1"/>
</dbReference>
<dbReference type="Gene3D" id="4.10.990.10">
    <property type="match status" value="1"/>
</dbReference>
<dbReference type="HAMAP" id="MF_01341">
    <property type="entry name" value="Ribosomal_uL15"/>
    <property type="match status" value="1"/>
</dbReference>
<dbReference type="InterPro" id="IPR027386">
    <property type="entry name" value="Rbsml_uL15_N"/>
</dbReference>
<dbReference type="InterPro" id="IPR030878">
    <property type="entry name" value="Ribosomal_uL15"/>
</dbReference>
<dbReference type="InterPro" id="IPR021131">
    <property type="entry name" value="Ribosomal_uL15/eL18"/>
</dbReference>
<dbReference type="InterPro" id="IPR036227">
    <property type="entry name" value="Ribosomal_uL15/eL18_sf"/>
</dbReference>
<dbReference type="InterPro" id="IPR001196">
    <property type="entry name" value="Ribosomal_uL15_CS"/>
</dbReference>
<dbReference type="PANTHER" id="PTHR11721">
    <property type="entry name" value="60S RIBOSOMAL PROTEIN L27A"/>
    <property type="match status" value="1"/>
</dbReference>
<dbReference type="PANTHER" id="PTHR11721:SF3">
    <property type="entry name" value="LARGE RIBOSOMAL SUBUNIT PROTEIN UL15"/>
    <property type="match status" value="1"/>
</dbReference>
<dbReference type="Pfam" id="PF00828">
    <property type="entry name" value="Ribosomal_L27A"/>
    <property type="match status" value="1"/>
</dbReference>
<dbReference type="SUPFAM" id="SSF52080">
    <property type="entry name" value="Ribosomal proteins L15p and L18e"/>
    <property type="match status" value="1"/>
</dbReference>
<dbReference type="PROSITE" id="PS00475">
    <property type="entry name" value="RIBOSOMAL_L15"/>
    <property type="match status" value="1"/>
</dbReference>
<sequence>MIRRRKKVRKLRGSHTHGWGCKKKHRGGGSKGGRGMAGTGKRNKSKWTWTIKYAPDHLGKRGFSRPPEVQREVRTVTLKSIDENLDELLQKGIAYEEEGKIIVDTTQFADKVLGTGKITKPLVIKARAFSSKAEEKIKAAGGEAVLV</sequence>
<name>RL15_PYRAB</name>
<organism>
    <name type="scientific">Pyrococcus abyssi (strain GE5 / Orsay)</name>
    <dbReference type="NCBI Taxonomy" id="272844"/>
    <lineage>
        <taxon>Archaea</taxon>
        <taxon>Methanobacteriati</taxon>
        <taxon>Methanobacteriota</taxon>
        <taxon>Thermococci</taxon>
        <taxon>Thermococcales</taxon>
        <taxon>Thermococcaceae</taxon>
        <taxon>Pyrococcus</taxon>
    </lineage>
</organism>
<proteinExistence type="inferred from homology"/>
<comment type="function">
    <text evidence="1">Binds to the 23S rRNA.</text>
</comment>
<comment type="subunit">
    <text evidence="1">Part of the 50S ribosomal subunit.</text>
</comment>
<comment type="similarity">
    <text evidence="1">Belongs to the universal ribosomal protein uL15 family.</text>
</comment>
<evidence type="ECO:0000255" key="1">
    <source>
        <dbReference type="HAMAP-Rule" id="MF_01341"/>
    </source>
</evidence>
<evidence type="ECO:0000256" key="2">
    <source>
        <dbReference type="SAM" id="MobiDB-lite"/>
    </source>
</evidence>
<evidence type="ECO:0000305" key="3"/>
<accession>Q9V1V7</accession>
<accession>G8ZHV3</accession>
<feature type="chain" id="PRO_0000104870" description="Large ribosomal subunit protein uL15">
    <location>
        <begin position="1"/>
        <end position="147"/>
    </location>
</feature>
<feature type="region of interest" description="Disordered" evidence="2">
    <location>
        <begin position="1"/>
        <end position="43"/>
    </location>
</feature>
<feature type="compositionally biased region" description="Basic residues" evidence="2">
    <location>
        <begin position="1"/>
        <end position="28"/>
    </location>
</feature>
<feature type="compositionally biased region" description="Gly residues" evidence="2">
    <location>
        <begin position="29"/>
        <end position="38"/>
    </location>
</feature>
<keyword id="KW-0687">Ribonucleoprotein</keyword>
<keyword id="KW-0689">Ribosomal protein</keyword>
<keyword id="KW-0694">RNA-binding</keyword>
<keyword id="KW-0699">rRNA-binding</keyword>
<gene>
    <name evidence="1" type="primary">rpl15</name>
    <name type="ordered locus">PYRAB03190</name>
    <name type="ORF">PAB2138</name>
</gene>
<reference key="1">
    <citation type="journal article" date="2003" name="Mol. Microbiol.">
        <title>An integrated analysis of the genome of the hyperthermophilic archaeon Pyrococcus abyssi.</title>
        <authorList>
            <person name="Cohen G.N."/>
            <person name="Barbe V."/>
            <person name="Flament D."/>
            <person name="Galperin M."/>
            <person name="Heilig R."/>
            <person name="Lecompte O."/>
            <person name="Poch O."/>
            <person name="Prieur D."/>
            <person name="Querellou J."/>
            <person name="Ripp R."/>
            <person name="Thierry J.-C."/>
            <person name="Van der Oost J."/>
            <person name="Weissenbach J."/>
            <person name="Zivanovic Y."/>
            <person name="Forterre P."/>
        </authorList>
    </citation>
    <scope>NUCLEOTIDE SEQUENCE [LARGE SCALE GENOMIC DNA]</scope>
    <source>
        <strain>GE5 / Orsay</strain>
    </source>
</reference>
<reference key="2">
    <citation type="journal article" date="2012" name="Curr. Microbiol.">
        <title>Re-annotation of two hyperthermophilic archaea Pyrococcus abyssi GE5 and Pyrococcus furiosus DSM 3638.</title>
        <authorList>
            <person name="Gao J."/>
            <person name="Wang J."/>
        </authorList>
    </citation>
    <scope>GENOME REANNOTATION</scope>
    <source>
        <strain>GE5 / Orsay</strain>
    </source>
</reference>
<protein>
    <recommendedName>
        <fullName evidence="1">Large ribosomal subunit protein uL15</fullName>
    </recommendedName>
    <alternativeName>
        <fullName evidence="3">50S ribosomal protein L15</fullName>
    </alternativeName>
</protein>